<name>Z_LATVB</name>
<comment type="function">
    <text evidence="1 2">Plays a crucial role in virion assembly and budding. Expressed late in the virus life cycle, it acts as an inhibitor of viral transcription and RNA synthesis by interacting with the viral polymerase L. Presumably recruits the NP encapsidated genome to cellular membranes at budding sites via direct interaction with NP. Plays critical roles in the final steps of viral release by interacting with host TSG101, a member of the vacuolar protein-sorting pathway and using other cellular host proteins involved in vesicle formation pathway. The budding of the virus progeny occurs after association of protein Z with the viral glycoprotein complex SSP-GP1-GP2 at the cell periphery, step that requires myristoylation of protein Z. Also selectively represses protein production by associating with host eIF4E (By similarity). In cell-based minigenome assay, has an inhibitory effect on the ribonucleoprotein machinery (vRNP), which is responsible for the replication and transcription of the viral genome (By similarity).</text>
</comment>
<comment type="subunit">
    <text evidence="2">Interacts with protein NP; this interaction probably directs the encapsidated genome to budding sites. Interacts (via RING domain) with polymerase L; this interaction inhibits viral transcription and replication, Z partially blocks the product exit tunnel for the releasing nascent RNA product. Interacts with the glycoprotein complex; this interaction plays a role in virion budding. Interacts with host eIF4E; this interaction results in eIF4E reduced affinity for its substrate, the 5'-m7 G cap structure. Interacts (via late-budding domain) with host TSG101; this interaction is essential for budding and release of viral particles. Interacts with host RPLP0; this interaction may serve to load ribosome-like particles inside the virion. Interacts with host PML; this interaction induces PML bodies redistribution in the cytoplasm upon viral infection.</text>
</comment>
<comment type="subcellular location">
    <subcellularLocation>
        <location evidence="2">Virion</location>
    </subcellularLocation>
    <subcellularLocation>
        <location evidence="2">Host cytoplasm</location>
        <location evidence="2">Host perinuclear region</location>
    </subcellularLocation>
    <subcellularLocation>
        <location evidence="2">Host cell membrane</location>
        <topology evidence="2">Lipid-anchor</topology>
        <orientation evidence="2">Cytoplasmic side</orientation>
    </subcellularLocation>
    <text evidence="2">Mainly perinuclear. During budding, associates at the inner side of the plasma membrane of infected cells.</text>
</comment>
<comment type="domain">
    <text evidence="2">Late-budding domains (L domains) are short sequence motifs essential for viral particle budding. They recruit proteins of the host ESCRT machinery (Endosomal Sorting Complex Required for Transport) or ESCRT-associated proteins.</text>
</comment>
<comment type="PTM">
    <text evidence="1">Myristoylation is required for the role of RING finger protein Z in assembly and budding.</text>
</comment>
<comment type="similarity">
    <text evidence="2">Belongs to the arenaviridae Z protein family.</text>
</comment>
<evidence type="ECO:0000250" key="1">
    <source>
        <dbReference type="UniProtKB" id="P18541"/>
    </source>
</evidence>
<evidence type="ECO:0000255" key="2">
    <source>
        <dbReference type="HAMAP-Rule" id="MF_04087"/>
    </source>
</evidence>
<proteinExistence type="inferred from homology"/>
<sequence length="91" mass="10202">MGSKQSAPPKPLQLPQPRVSLLREAKPSLYGRYNCKCCWFQDKNLVECSDHYLCLKCISSMLKRGKNCEICGKAIPTYIEVGITPTAPQLN</sequence>
<accession>A9JR44</accession>
<dbReference type="EMBL" id="AY960333">
    <property type="protein sequence ID" value="AAY27824.1"/>
    <property type="molecule type" value="Genomic_RNA"/>
</dbReference>
<dbReference type="EMBL" id="EU627612">
    <property type="protein sequence ID" value="ACC94299.1"/>
    <property type="molecule type" value="Genomic_RNA"/>
</dbReference>
<dbReference type="RefSeq" id="YP_001936025.1">
    <property type="nucleotide sequence ID" value="NC_010760.1"/>
</dbReference>
<dbReference type="KEGG" id="vg:6334525"/>
<dbReference type="OrthoDB" id="23344at10239"/>
<dbReference type="Proteomes" id="UP000009262">
    <property type="component" value="Genome"/>
</dbReference>
<dbReference type="GO" id="GO:0044220">
    <property type="term" value="C:host cell perinuclear region of cytoplasm"/>
    <property type="evidence" value="ECO:0007669"/>
    <property type="project" value="UniProtKB-SubCell"/>
</dbReference>
<dbReference type="GO" id="GO:0020002">
    <property type="term" value="C:host cell plasma membrane"/>
    <property type="evidence" value="ECO:0007669"/>
    <property type="project" value="UniProtKB-SubCell"/>
</dbReference>
<dbReference type="GO" id="GO:0016020">
    <property type="term" value="C:membrane"/>
    <property type="evidence" value="ECO:0007669"/>
    <property type="project" value="UniProtKB-UniRule"/>
</dbReference>
<dbReference type="GO" id="GO:0044423">
    <property type="term" value="C:virion component"/>
    <property type="evidence" value="ECO:0007669"/>
    <property type="project" value="UniProtKB-UniRule"/>
</dbReference>
<dbReference type="GO" id="GO:0003723">
    <property type="term" value="F:RNA binding"/>
    <property type="evidence" value="ECO:0007669"/>
    <property type="project" value="UniProtKB-UniRule"/>
</dbReference>
<dbReference type="GO" id="GO:0008270">
    <property type="term" value="F:zinc ion binding"/>
    <property type="evidence" value="ECO:0007669"/>
    <property type="project" value="UniProtKB-UniRule"/>
</dbReference>
<dbReference type="GO" id="GO:0046761">
    <property type="term" value="P:viral budding from plasma membrane"/>
    <property type="evidence" value="ECO:0007669"/>
    <property type="project" value="UniProtKB-UniRule"/>
</dbReference>
<dbReference type="GO" id="GO:0039702">
    <property type="term" value="P:viral budding via host ESCRT complex"/>
    <property type="evidence" value="ECO:0007669"/>
    <property type="project" value="UniProtKB-UniRule"/>
</dbReference>
<dbReference type="Gene3D" id="3.30.160.310">
    <property type="match status" value="1"/>
</dbReference>
<dbReference type="HAMAP" id="MF_04087">
    <property type="entry name" value="ARENA_Z"/>
    <property type="match status" value="1"/>
</dbReference>
<dbReference type="InterPro" id="IPR024183">
    <property type="entry name" value="RING_finger_Z_arenaviridae"/>
</dbReference>
<dbReference type="InterPro" id="IPR038485">
    <property type="entry name" value="Z_RING-type_Znf_sf"/>
</dbReference>
<dbReference type="InterPro" id="IPR003224">
    <property type="entry name" value="Z_RING_Znf"/>
</dbReference>
<dbReference type="Pfam" id="PF03854">
    <property type="entry name" value="zf-P11"/>
    <property type="match status" value="1"/>
</dbReference>
<dbReference type="PIRSF" id="PIRSF004030">
    <property type="entry name" value="Z_ArenaV"/>
    <property type="match status" value="1"/>
</dbReference>
<dbReference type="SUPFAM" id="SSF57850">
    <property type="entry name" value="RING/U-box"/>
    <property type="match status" value="1"/>
</dbReference>
<gene>
    <name evidence="2" type="primary">Z</name>
</gene>
<feature type="initiator methionine" description="Removed; by host" evidence="2">
    <location>
        <position position="1"/>
    </location>
</feature>
<feature type="chain" id="PRO_0000361034" description="RING finger protein Z" evidence="2">
    <location>
        <begin position="2"/>
        <end position="91"/>
    </location>
</feature>
<feature type="zinc finger region" description="RING-type; atypical" evidence="2">
    <location>
        <begin position="35"/>
        <end position="71"/>
    </location>
</feature>
<feature type="short sequence motif" description="PTAP/PSAP motif" evidence="2">
    <location>
        <begin position="85"/>
        <end position="88"/>
    </location>
</feature>
<feature type="lipid moiety-binding region" description="N-myristoyl glycine; by host" evidence="2">
    <location>
        <position position="2"/>
    </location>
</feature>
<organism>
    <name type="scientific">Latino mammarenavirus (isolate Rat/Bolivia/MARU 1924/1965)</name>
    <name type="common">LATV</name>
    <dbReference type="NCBI Taxonomy" id="3052311"/>
    <lineage>
        <taxon>Viruses</taxon>
        <taxon>Riboviria</taxon>
        <taxon>Orthornavirae</taxon>
        <taxon>Negarnaviricota</taxon>
        <taxon>Polyploviricotina</taxon>
        <taxon>Ellioviricetes</taxon>
        <taxon>Bunyavirales</taxon>
        <taxon>Arenaviridae</taxon>
        <taxon>Mammarenavirus</taxon>
    </lineage>
</organism>
<keyword id="KW-1032">Host cell membrane</keyword>
<keyword id="KW-1035">Host cytoplasm</keyword>
<keyword id="KW-1043">Host membrane</keyword>
<keyword id="KW-0945">Host-virus interaction</keyword>
<keyword id="KW-0449">Lipoprotein</keyword>
<keyword id="KW-0472">Membrane</keyword>
<keyword id="KW-0479">Metal-binding</keyword>
<keyword id="KW-0519">Myristate</keyword>
<keyword id="KW-1185">Reference proteome</keyword>
<keyword id="KW-1198">Viral budding</keyword>
<keyword id="KW-1187">Viral budding via the host ESCRT complexes</keyword>
<keyword id="KW-1188">Viral release from host cell</keyword>
<keyword id="KW-0946">Virion</keyword>
<keyword id="KW-0862">Zinc</keyword>
<keyword id="KW-0863">Zinc-finger</keyword>
<protein>
    <recommendedName>
        <fullName evidence="2">RING finger protein Z</fullName>
        <shortName evidence="2">Protein Z</shortName>
    </recommendedName>
    <alternativeName>
        <fullName evidence="2">Zinc-binding protein</fullName>
    </alternativeName>
</protein>
<organismHost>
    <name type="scientific">Calomys callosus</name>
    <name type="common">Large vesper mouse</name>
    <dbReference type="NCBI Taxonomy" id="56210"/>
</organismHost>
<reference key="1">
    <citation type="submission" date="2005-03" db="EMBL/GenBank/DDBJ databases">
        <title>Genetic diversity of Machupo virus (family Arenaviridae): implications for synthetic antibody therapy for Bolivian hemorrhagic fever.</title>
        <authorList>
            <person name="Milazzo M.L."/>
            <person name="Cajimat M.N.B."/>
            <person name="Rollin P.E."/>
            <person name="Dodsley N.A."/>
            <person name="Nichol S.T."/>
            <person name="Bowen M.D."/>
            <person name="Ksiazek T.G."/>
            <person name="Fulhorst C.F."/>
        </authorList>
    </citation>
    <scope>NUCLEOTIDE SEQUENCE [GENOMIC RNA]</scope>
</reference>
<reference key="2">
    <citation type="journal article" date="2008" name="Curr. Opin. Microbiol.">
        <title>Phylogeny of the genus Arenavirus.</title>
        <authorList>
            <person name="Charrel R.N."/>
            <person name="de Lamballerie X."/>
            <person name="Emonet S."/>
        </authorList>
    </citation>
    <scope>NUCLEOTIDE SEQUENCE [GENOMIC RNA]</scope>
</reference>